<comment type="function">
    <text evidence="1">Transfers the 4'-phosphopantetheine moiety from coenzyme A to a Ser of acyl-carrier-protein.</text>
</comment>
<comment type="catalytic activity">
    <reaction evidence="1">
        <text>apo-[ACP] + CoA = holo-[ACP] + adenosine 3',5'-bisphosphate + H(+)</text>
        <dbReference type="Rhea" id="RHEA:12068"/>
        <dbReference type="Rhea" id="RHEA-COMP:9685"/>
        <dbReference type="Rhea" id="RHEA-COMP:9690"/>
        <dbReference type="ChEBI" id="CHEBI:15378"/>
        <dbReference type="ChEBI" id="CHEBI:29999"/>
        <dbReference type="ChEBI" id="CHEBI:57287"/>
        <dbReference type="ChEBI" id="CHEBI:58343"/>
        <dbReference type="ChEBI" id="CHEBI:64479"/>
        <dbReference type="EC" id="2.7.8.7"/>
    </reaction>
</comment>
<comment type="cofactor">
    <cofactor evidence="1">
        <name>Mg(2+)</name>
        <dbReference type="ChEBI" id="CHEBI:18420"/>
    </cofactor>
</comment>
<comment type="subcellular location">
    <subcellularLocation>
        <location evidence="1">Cytoplasm</location>
    </subcellularLocation>
</comment>
<comment type="similarity">
    <text evidence="1">Belongs to the P-Pant transferase superfamily. AcpS family.</text>
</comment>
<feature type="chain" id="PRO_0000228302" description="Holo-[acyl-carrier-protein] synthase">
    <location>
        <begin position="1"/>
        <end position="126"/>
    </location>
</feature>
<feature type="binding site" evidence="1">
    <location>
        <position position="9"/>
    </location>
    <ligand>
        <name>Mg(2+)</name>
        <dbReference type="ChEBI" id="CHEBI:18420"/>
    </ligand>
</feature>
<feature type="binding site" evidence="1">
    <location>
        <position position="58"/>
    </location>
    <ligand>
        <name>Mg(2+)</name>
        <dbReference type="ChEBI" id="CHEBI:18420"/>
    </ligand>
</feature>
<sequence>MAILGLGTDIVEIARIEAVISRSGERLARRVLSDNEWAIWETHQQPVRFLAKRFAVKEAAAKAFGTGIRNGLAFNQFEVFNDELGKPRLRLWGEALTLAEKLGVAHMHVTLADERHYACATVILES</sequence>
<dbReference type="EC" id="2.7.8.7" evidence="1"/>
<dbReference type="EMBL" id="CP000026">
    <property type="protein sequence ID" value="AAV76310.1"/>
    <property type="molecule type" value="Genomic_DNA"/>
</dbReference>
<dbReference type="RefSeq" id="WP_000986043.1">
    <property type="nucleotide sequence ID" value="NC_006511.1"/>
</dbReference>
<dbReference type="SMR" id="Q5PIJ4"/>
<dbReference type="GeneID" id="66757004"/>
<dbReference type="KEGG" id="spt:SPA0288"/>
<dbReference type="HOGENOM" id="CLU_089696_3_1_6"/>
<dbReference type="Proteomes" id="UP000008185">
    <property type="component" value="Chromosome"/>
</dbReference>
<dbReference type="GO" id="GO:0005737">
    <property type="term" value="C:cytoplasm"/>
    <property type="evidence" value="ECO:0007669"/>
    <property type="project" value="UniProtKB-SubCell"/>
</dbReference>
<dbReference type="GO" id="GO:0008897">
    <property type="term" value="F:holo-[acyl-carrier-protein] synthase activity"/>
    <property type="evidence" value="ECO:0007669"/>
    <property type="project" value="UniProtKB-UniRule"/>
</dbReference>
<dbReference type="GO" id="GO:0000287">
    <property type="term" value="F:magnesium ion binding"/>
    <property type="evidence" value="ECO:0007669"/>
    <property type="project" value="UniProtKB-UniRule"/>
</dbReference>
<dbReference type="GO" id="GO:0006633">
    <property type="term" value="P:fatty acid biosynthetic process"/>
    <property type="evidence" value="ECO:0007669"/>
    <property type="project" value="UniProtKB-UniRule"/>
</dbReference>
<dbReference type="FunFam" id="3.90.470.20:FF:000001">
    <property type="entry name" value="Holo-[acyl-carrier-protein] synthase"/>
    <property type="match status" value="1"/>
</dbReference>
<dbReference type="Gene3D" id="3.90.470.20">
    <property type="entry name" value="4'-phosphopantetheinyl transferase domain"/>
    <property type="match status" value="1"/>
</dbReference>
<dbReference type="HAMAP" id="MF_00101">
    <property type="entry name" value="AcpS"/>
    <property type="match status" value="1"/>
</dbReference>
<dbReference type="InterPro" id="IPR008278">
    <property type="entry name" value="4-PPantetheinyl_Trfase_dom"/>
</dbReference>
<dbReference type="InterPro" id="IPR037143">
    <property type="entry name" value="4-PPantetheinyl_Trfase_dom_sf"/>
</dbReference>
<dbReference type="InterPro" id="IPR002582">
    <property type="entry name" value="ACPS"/>
</dbReference>
<dbReference type="InterPro" id="IPR004568">
    <property type="entry name" value="Ppantetheine-prot_Trfase_dom"/>
</dbReference>
<dbReference type="NCBIfam" id="TIGR00516">
    <property type="entry name" value="acpS"/>
    <property type="match status" value="1"/>
</dbReference>
<dbReference type="NCBIfam" id="TIGR00556">
    <property type="entry name" value="pantethn_trn"/>
    <property type="match status" value="1"/>
</dbReference>
<dbReference type="Pfam" id="PF01648">
    <property type="entry name" value="ACPS"/>
    <property type="match status" value="1"/>
</dbReference>
<dbReference type="SUPFAM" id="SSF56214">
    <property type="entry name" value="4'-phosphopantetheinyl transferase"/>
    <property type="match status" value="1"/>
</dbReference>
<accession>Q5PIJ4</accession>
<protein>
    <recommendedName>
        <fullName evidence="1">Holo-[acyl-carrier-protein] synthase</fullName>
        <shortName evidence="1">Holo-ACP synthase</shortName>
        <ecNumber evidence="1">2.7.8.7</ecNumber>
    </recommendedName>
    <alternativeName>
        <fullName evidence="1">4'-phosphopantetheinyl transferase AcpS</fullName>
    </alternativeName>
</protein>
<gene>
    <name evidence="1" type="primary">acpS</name>
    <name type="ordered locus">SPA0288</name>
</gene>
<proteinExistence type="inferred from homology"/>
<name>ACPS_SALPA</name>
<keyword id="KW-0963">Cytoplasm</keyword>
<keyword id="KW-0275">Fatty acid biosynthesis</keyword>
<keyword id="KW-0276">Fatty acid metabolism</keyword>
<keyword id="KW-0444">Lipid biosynthesis</keyword>
<keyword id="KW-0443">Lipid metabolism</keyword>
<keyword id="KW-0460">Magnesium</keyword>
<keyword id="KW-0479">Metal-binding</keyword>
<keyword id="KW-0808">Transferase</keyword>
<reference key="1">
    <citation type="journal article" date="2004" name="Nat. Genet.">
        <title>Comparison of genome degradation in Paratyphi A and Typhi, human-restricted serovars of Salmonella enterica that cause typhoid.</title>
        <authorList>
            <person name="McClelland M."/>
            <person name="Sanderson K.E."/>
            <person name="Clifton S.W."/>
            <person name="Latreille P."/>
            <person name="Porwollik S."/>
            <person name="Sabo A."/>
            <person name="Meyer R."/>
            <person name="Bieri T."/>
            <person name="Ozersky P."/>
            <person name="McLellan M."/>
            <person name="Harkins C.R."/>
            <person name="Wang C."/>
            <person name="Nguyen C."/>
            <person name="Berghoff A."/>
            <person name="Elliott G."/>
            <person name="Kohlberg S."/>
            <person name="Strong C."/>
            <person name="Du F."/>
            <person name="Carter J."/>
            <person name="Kremizki C."/>
            <person name="Layman D."/>
            <person name="Leonard S."/>
            <person name="Sun H."/>
            <person name="Fulton L."/>
            <person name="Nash W."/>
            <person name="Miner T."/>
            <person name="Minx P."/>
            <person name="Delehaunty K."/>
            <person name="Fronick C."/>
            <person name="Magrini V."/>
            <person name="Nhan M."/>
            <person name="Warren W."/>
            <person name="Florea L."/>
            <person name="Spieth J."/>
            <person name="Wilson R.K."/>
        </authorList>
    </citation>
    <scope>NUCLEOTIDE SEQUENCE [LARGE SCALE GENOMIC DNA]</scope>
    <source>
        <strain>ATCC 9150 / SARB42</strain>
    </source>
</reference>
<organism>
    <name type="scientific">Salmonella paratyphi A (strain ATCC 9150 / SARB42)</name>
    <dbReference type="NCBI Taxonomy" id="295319"/>
    <lineage>
        <taxon>Bacteria</taxon>
        <taxon>Pseudomonadati</taxon>
        <taxon>Pseudomonadota</taxon>
        <taxon>Gammaproteobacteria</taxon>
        <taxon>Enterobacterales</taxon>
        <taxon>Enterobacteriaceae</taxon>
        <taxon>Salmonella</taxon>
    </lineage>
</organism>
<evidence type="ECO:0000255" key="1">
    <source>
        <dbReference type="HAMAP-Rule" id="MF_00101"/>
    </source>
</evidence>